<keyword id="KW-0150">Chloroplast</keyword>
<keyword id="KW-0472">Membrane</keyword>
<keyword id="KW-0520">NAD</keyword>
<keyword id="KW-0521">NADP</keyword>
<keyword id="KW-0934">Plastid</keyword>
<keyword id="KW-0618">Plastoquinone</keyword>
<keyword id="KW-0874">Quinone</keyword>
<keyword id="KW-1185">Reference proteome</keyword>
<keyword id="KW-0793">Thylakoid</keyword>
<keyword id="KW-1278">Translocase</keyword>
<keyword id="KW-0812">Transmembrane</keyword>
<keyword id="KW-1133">Transmembrane helix</keyword>
<keyword id="KW-0813">Transport</keyword>
<dbReference type="EC" id="7.1.1.-" evidence="1"/>
<dbReference type="EMBL" id="EF115542">
    <property type="protein sequence ID" value="ABK79556.1"/>
    <property type="molecule type" value="Genomic_DNA"/>
</dbReference>
<dbReference type="SMR" id="P0CD51"/>
<dbReference type="FunCoup" id="P0CD51">
    <property type="interactions" value="5"/>
</dbReference>
<dbReference type="STRING" id="4558.P0CD51"/>
<dbReference type="KEGG" id="sbi:4549098"/>
<dbReference type="KEGG" id="sbi:4549188"/>
<dbReference type="InParanoid" id="P0CD51"/>
<dbReference type="OrthoDB" id="783395at2759"/>
<dbReference type="Proteomes" id="UP000000768">
    <property type="component" value="Chloroplast"/>
</dbReference>
<dbReference type="ExpressionAtlas" id="P0CD51">
    <property type="expression patterns" value="baseline"/>
</dbReference>
<dbReference type="GO" id="GO:0009535">
    <property type="term" value="C:chloroplast thylakoid membrane"/>
    <property type="evidence" value="ECO:0007669"/>
    <property type="project" value="UniProtKB-SubCell"/>
</dbReference>
<dbReference type="GO" id="GO:0008137">
    <property type="term" value="F:NADH dehydrogenase (ubiquinone) activity"/>
    <property type="evidence" value="ECO:0007669"/>
    <property type="project" value="InterPro"/>
</dbReference>
<dbReference type="GO" id="GO:0048038">
    <property type="term" value="F:quinone binding"/>
    <property type="evidence" value="ECO:0007669"/>
    <property type="project" value="UniProtKB-KW"/>
</dbReference>
<dbReference type="GO" id="GO:0042773">
    <property type="term" value="P:ATP synthesis coupled electron transport"/>
    <property type="evidence" value="ECO:0007669"/>
    <property type="project" value="InterPro"/>
</dbReference>
<dbReference type="GO" id="GO:0019684">
    <property type="term" value="P:photosynthesis, light reaction"/>
    <property type="evidence" value="ECO:0007669"/>
    <property type="project" value="UniProtKB-UniRule"/>
</dbReference>
<dbReference type="HAMAP" id="MF_00445">
    <property type="entry name" value="NDH1_NuoN_1"/>
    <property type="match status" value="1"/>
</dbReference>
<dbReference type="InterPro" id="IPR010096">
    <property type="entry name" value="NADH-Q_OxRdtase_suN/2"/>
</dbReference>
<dbReference type="InterPro" id="IPR001750">
    <property type="entry name" value="ND/Mrp_TM"/>
</dbReference>
<dbReference type="InterPro" id="IPR045693">
    <property type="entry name" value="Ndh2_N"/>
</dbReference>
<dbReference type="NCBIfam" id="TIGR01770">
    <property type="entry name" value="NDH_I_N"/>
    <property type="match status" value="1"/>
</dbReference>
<dbReference type="NCBIfam" id="NF002701">
    <property type="entry name" value="PRK02504.1"/>
    <property type="match status" value="1"/>
</dbReference>
<dbReference type="PANTHER" id="PTHR22773">
    <property type="entry name" value="NADH DEHYDROGENASE"/>
    <property type="match status" value="1"/>
</dbReference>
<dbReference type="Pfam" id="PF19530">
    <property type="entry name" value="Ndh2_N"/>
    <property type="match status" value="1"/>
</dbReference>
<dbReference type="Pfam" id="PF00361">
    <property type="entry name" value="Proton_antipo_M"/>
    <property type="match status" value="1"/>
</dbReference>
<dbReference type="PRINTS" id="PR01434">
    <property type="entry name" value="NADHDHGNASE5"/>
</dbReference>
<sequence>MIWHVQNENFILDSTRIFMKAFHLLLFNGSFIFPECILIFGLILLLMIDLTSDQKDRPWFYFISSTSLVISITALLFRWREEPIISFSGNFQTNNFNEIFQFLILLCSTLCIPLSVEYIECTEMAITEFLLFVLTATLGGMFLCGANDLITIFVAPECFSLCSYLLSGYTKRDLRSNEATMKYLLMGGASSSILVHGFSWLYGSSGGEIELQEIVNGLINTQMYNSPGISIALIFITVGLGFKLSPAPFHQWTPDVYEGSPTPVVAFLSVTSKVAASALATRILDIPFYFSSNEWHLLLEILAILSMILGNLLAITQTSMKRMLAYSSIGQIGYVIIGIIVGDSNDGYASMITYMLFYISMNLGTFACIVLFGLRTGTDNIRDYAGLYTKDPFLALSLALCLLSLGGLPPLAGFFGKLYLFWCGWQAGLYFLVSIGLLTSVLSIYYYLKIIKLLMTGRNQEITPYVRNYRRSPLRSNNSIELSMTVCVIASTIPGISMNPILAIAQDTLF</sequence>
<proteinExistence type="inferred from homology"/>
<accession>P0CD51</accession>
<accession>A1E9W8</accession>
<reference key="1">
    <citation type="journal article" date="2007" name="Theor. Appl. Genet.">
        <title>Complete chloroplast genome sequences of Hordeum vulgare, Sorghum bicolor and Agrostis stolonifera, and comparative analyses with other grass genomes.</title>
        <authorList>
            <person name="Saski C."/>
            <person name="Lee S.-B."/>
            <person name="Fjellheim S."/>
            <person name="Guda C."/>
            <person name="Jansen R.K."/>
            <person name="Luo H."/>
            <person name="Tomkins J."/>
            <person name="Rognli O.A."/>
            <person name="Daniell H."/>
            <person name="Clarke J.L."/>
        </authorList>
    </citation>
    <scope>NUCLEOTIDE SEQUENCE [LARGE SCALE GENOMIC DNA]</scope>
    <source>
        <strain>cv. BTx623</strain>
    </source>
</reference>
<gene>
    <name evidence="1" type="primary">ndhB2</name>
</gene>
<comment type="function">
    <text evidence="1">NDH shuttles electrons from NAD(P)H:plastoquinone, via FMN and iron-sulfur (Fe-S) centers, to quinones in the photosynthetic chain and possibly in a chloroplast respiratory chain. The immediate electron acceptor for the enzyme in this species is believed to be plastoquinone. Couples the redox reaction to proton translocation, and thus conserves the redox energy in a proton gradient.</text>
</comment>
<comment type="catalytic activity">
    <reaction evidence="1">
        <text>a plastoquinone + NADH + (n+1) H(+)(in) = a plastoquinol + NAD(+) + n H(+)(out)</text>
        <dbReference type="Rhea" id="RHEA:42608"/>
        <dbReference type="Rhea" id="RHEA-COMP:9561"/>
        <dbReference type="Rhea" id="RHEA-COMP:9562"/>
        <dbReference type="ChEBI" id="CHEBI:15378"/>
        <dbReference type="ChEBI" id="CHEBI:17757"/>
        <dbReference type="ChEBI" id="CHEBI:57540"/>
        <dbReference type="ChEBI" id="CHEBI:57945"/>
        <dbReference type="ChEBI" id="CHEBI:62192"/>
    </reaction>
</comment>
<comment type="catalytic activity">
    <reaction evidence="1">
        <text>a plastoquinone + NADPH + (n+1) H(+)(in) = a plastoquinol + NADP(+) + n H(+)(out)</text>
        <dbReference type="Rhea" id="RHEA:42612"/>
        <dbReference type="Rhea" id="RHEA-COMP:9561"/>
        <dbReference type="Rhea" id="RHEA-COMP:9562"/>
        <dbReference type="ChEBI" id="CHEBI:15378"/>
        <dbReference type="ChEBI" id="CHEBI:17757"/>
        <dbReference type="ChEBI" id="CHEBI:57783"/>
        <dbReference type="ChEBI" id="CHEBI:58349"/>
        <dbReference type="ChEBI" id="CHEBI:62192"/>
    </reaction>
</comment>
<comment type="subunit">
    <text evidence="1">NDH is composed of at least 16 different subunits, 5 of which are encoded in the nucleus.</text>
</comment>
<comment type="subcellular location">
    <subcellularLocation>
        <location evidence="1">Plastid</location>
        <location evidence="1">Chloroplast thylakoid membrane</location>
        <topology evidence="1">Multi-pass membrane protein</topology>
    </subcellularLocation>
</comment>
<comment type="similarity">
    <text evidence="1">Belongs to the complex I subunit 2 family.</text>
</comment>
<organism>
    <name type="scientific">Sorghum bicolor</name>
    <name type="common">Sorghum</name>
    <name type="synonym">Sorghum vulgare</name>
    <dbReference type="NCBI Taxonomy" id="4558"/>
    <lineage>
        <taxon>Eukaryota</taxon>
        <taxon>Viridiplantae</taxon>
        <taxon>Streptophyta</taxon>
        <taxon>Embryophyta</taxon>
        <taxon>Tracheophyta</taxon>
        <taxon>Spermatophyta</taxon>
        <taxon>Magnoliopsida</taxon>
        <taxon>Liliopsida</taxon>
        <taxon>Poales</taxon>
        <taxon>Poaceae</taxon>
        <taxon>PACMAD clade</taxon>
        <taxon>Panicoideae</taxon>
        <taxon>Andropogonodae</taxon>
        <taxon>Andropogoneae</taxon>
        <taxon>Sorghinae</taxon>
        <taxon>Sorghum</taxon>
    </lineage>
</organism>
<name>NU2C2_SORBI</name>
<evidence type="ECO:0000255" key="1">
    <source>
        <dbReference type="HAMAP-Rule" id="MF_00445"/>
    </source>
</evidence>
<geneLocation type="chloroplast"/>
<feature type="chain" id="PRO_0000391313" description="NAD(P)H-quinone oxidoreductase subunit 2 B, chloroplastic">
    <location>
        <begin position="1"/>
        <end position="510"/>
    </location>
</feature>
<feature type="transmembrane region" description="Helical" evidence="1">
    <location>
        <begin position="31"/>
        <end position="51"/>
    </location>
</feature>
<feature type="transmembrane region" description="Helical" evidence="1">
    <location>
        <begin position="59"/>
        <end position="79"/>
    </location>
</feature>
<feature type="transmembrane region" description="Helical" evidence="1">
    <location>
        <begin position="99"/>
        <end position="119"/>
    </location>
</feature>
<feature type="transmembrane region" description="Helical" evidence="1">
    <location>
        <begin position="124"/>
        <end position="144"/>
    </location>
</feature>
<feature type="transmembrane region" description="Helical" evidence="1">
    <location>
        <begin position="149"/>
        <end position="169"/>
    </location>
</feature>
<feature type="transmembrane region" description="Helical" evidence="1">
    <location>
        <begin position="183"/>
        <end position="203"/>
    </location>
</feature>
<feature type="transmembrane region" description="Helical" evidence="1">
    <location>
        <begin position="229"/>
        <end position="249"/>
    </location>
</feature>
<feature type="transmembrane region" description="Helical" evidence="1">
    <location>
        <begin position="295"/>
        <end position="315"/>
    </location>
</feature>
<feature type="transmembrane region" description="Helical" evidence="1">
    <location>
        <begin position="323"/>
        <end position="343"/>
    </location>
</feature>
<feature type="transmembrane region" description="Helical" evidence="1">
    <location>
        <begin position="354"/>
        <end position="374"/>
    </location>
</feature>
<feature type="transmembrane region" description="Helical" evidence="1">
    <location>
        <begin position="395"/>
        <end position="415"/>
    </location>
</feature>
<feature type="transmembrane region" description="Helical" evidence="1">
    <location>
        <begin position="418"/>
        <end position="438"/>
    </location>
</feature>
<protein>
    <recommendedName>
        <fullName evidence="1">NAD(P)H-quinone oxidoreductase subunit 2 B, chloroplastic</fullName>
        <ecNumber evidence="1">7.1.1.-</ecNumber>
    </recommendedName>
    <alternativeName>
        <fullName evidence="1">NAD(P)H dehydrogenase, subunit 2 B</fullName>
    </alternativeName>
    <alternativeName>
        <fullName evidence="1">NADH-plastoquinone oxidoreductase subunit 2 B</fullName>
    </alternativeName>
</protein>